<keyword id="KW-0963">Cytoplasm</keyword>
<keyword id="KW-0342">GTP-binding</keyword>
<keyword id="KW-0436">Ligase</keyword>
<keyword id="KW-0460">Magnesium</keyword>
<keyword id="KW-0479">Metal-binding</keyword>
<keyword id="KW-0547">Nucleotide-binding</keyword>
<keyword id="KW-0658">Purine biosynthesis</keyword>
<keyword id="KW-1185">Reference proteome</keyword>
<sequence>MGKNVVVLGTQWGDEGKGKIVDLLTEQAKYVVRYQGGHNAGHTLVINGDKTVLHLIPSGILRDNVKCIIGNGVVLAPDALMKEINMLKERGIPVEERLLISEACPLILPFHSALDIAREKARGNKAIGTTGRGIGPAYEDKISRRGLRVGDLFNAELFAEKLKEVMAYHNFMLTEYYKVDAVDYEQTLSDALALADYLKSMCVDVTELLDNARKAGEPILFEGAQGTLLDIDHGTYPFVTSSNTTAGGVATGSGFGPRHLDYVLGIMKAYTTRVGAGPFPTELLCEVGDHLGTKGHEFGATTGRKRRPGWLDAVAMRRAVQINSVSGFCLTKLDVLDGLKEVKICVGYQHPDGTISKVTPLAAEGYEQVTPVYETMPGWSESTFGATFLEQLPQAAINYIKRIEELLETPIDIISTGPDRNETMILVSPFN</sequence>
<evidence type="ECO:0000255" key="1">
    <source>
        <dbReference type="HAMAP-Rule" id="MF_00011"/>
    </source>
</evidence>
<gene>
    <name evidence="1" type="primary">purA</name>
    <name type="ordered locus">SO_3937</name>
</gene>
<protein>
    <recommendedName>
        <fullName evidence="1">Adenylosuccinate synthetase</fullName>
        <shortName evidence="1">AMPSase</shortName>
        <shortName evidence="1">AdSS</shortName>
        <ecNumber evidence="1">6.3.4.4</ecNumber>
    </recommendedName>
    <alternativeName>
        <fullName evidence="1">IMP--aspartate ligase</fullName>
    </alternativeName>
</protein>
<reference key="1">
    <citation type="journal article" date="2002" name="Nat. Biotechnol.">
        <title>Genome sequence of the dissimilatory metal ion-reducing bacterium Shewanella oneidensis.</title>
        <authorList>
            <person name="Heidelberg J.F."/>
            <person name="Paulsen I.T."/>
            <person name="Nelson K.E."/>
            <person name="Gaidos E.J."/>
            <person name="Nelson W.C."/>
            <person name="Read T.D."/>
            <person name="Eisen J.A."/>
            <person name="Seshadri R."/>
            <person name="Ward N.L."/>
            <person name="Methe B.A."/>
            <person name="Clayton R.A."/>
            <person name="Meyer T."/>
            <person name="Tsapin A."/>
            <person name="Scott J."/>
            <person name="Beanan M.J."/>
            <person name="Brinkac L.M."/>
            <person name="Daugherty S.C."/>
            <person name="DeBoy R.T."/>
            <person name="Dodson R.J."/>
            <person name="Durkin A.S."/>
            <person name="Haft D.H."/>
            <person name="Kolonay J.F."/>
            <person name="Madupu R."/>
            <person name="Peterson J.D."/>
            <person name="Umayam L.A."/>
            <person name="White O."/>
            <person name="Wolf A.M."/>
            <person name="Vamathevan J.J."/>
            <person name="Weidman J.F."/>
            <person name="Impraim M."/>
            <person name="Lee K."/>
            <person name="Berry K.J."/>
            <person name="Lee C."/>
            <person name="Mueller J."/>
            <person name="Khouri H.M."/>
            <person name="Gill J."/>
            <person name="Utterback T.R."/>
            <person name="McDonald L.A."/>
            <person name="Feldblyum T.V."/>
            <person name="Smith H.O."/>
            <person name="Venter J.C."/>
            <person name="Nealson K.H."/>
            <person name="Fraser C.M."/>
        </authorList>
    </citation>
    <scope>NUCLEOTIDE SEQUENCE [LARGE SCALE GENOMIC DNA]</scope>
    <source>
        <strain>ATCC 700550 / JCM 31522 / CIP 106686 / LMG 19005 / NCIMB 14063 / MR-1</strain>
    </source>
</reference>
<name>PURA_SHEON</name>
<accession>Q8EAG5</accession>
<dbReference type="EC" id="6.3.4.4" evidence="1"/>
<dbReference type="EMBL" id="AE014299">
    <property type="protein sequence ID" value="AAN56912.1"/>
    <property type="molecule type" value="Genomic_DNA"/>
</dbReference>
<dbReference type="RefSeq" id="NP_719468.1">
    <property type="nucleotide sequence ID" value="NC_004347.2"/>
</dbReference>
<dbReference type="RefSeq" id="WP_011073680.1">
    <property type="nucleotide sequence ID" value="NC_004347.2"/>
</dbReference>
<dbReference type="SMR" id="Q8EAG5"/>
<dbReference type="STRING" id="211586.SO_3937"/>
<dbReference type="PaxDb" id="211586-SO_3937"/>
<dbReference type="KEGG" id="son:SO_3937"/>
<dbReference type="PATRIC" id="fig|211586.12.peg.3820"/>
<dbReference type="eggNOG" id="COG0104">
    <property type="taxonomic scope" value="Bacteria"/>
</dbReference>
<dbReference type="HOGENOM" id="CLU_029848_0_0_6"/>
<dbReference type="OrthoDB" id="9807553at2"/>
<dbReference type="PhylomeDB" id="Q8EAG5"/>
<dbReference type="BioCyc" id="SONE211586:G1GMP-3654-MONOMER"/>
<dbReference type="UniPathway" id="UPA00075">
    <property type="reaction ID" value="UER00335"/>
</dbReference>
<dbReference type="Proteomes" id="UP000008186">
    <property type="component" value="Chromosome"/>
</dbReference>
<dbReference type="GO" id="GO:0005737">
    <property type="term" value="C:cytoplasm"/>
    <property type="evidence" value="ECO:0000318"/>
    <property type="project" value="GO_Central"/>
</dbReference>
<dbReference type="GO" id="GO:0004019">
    <property type="term" value="F:adenylosuccinate synthase activity"/>
    <property type="evidence" value="ECO:0000318"/>
    <property type="project" value="GO_Central"/>
</dbReference>
<dbReference type="GO" id="GO:0005525">
    <property type="term" value="F:GTP binding"/>
    <property type="evidence" value="ECO:0007669"/>
    <property type="project" value="UniProtKB-UniRule"/>
</dbReference>
<dbReference type="GO" id="GO:0000287">
    <property type="term" value="F:magnesium ion binding"/>
    <property type="evidence" value="ECO:0007669"/>
    <property type="project" value="UniProtKB-UniRule"/>
</dbReference>
<dbReference type="GO" id="GO:0044208">
    <property type="term" value="P:'de novo' AMP biosynthetic process"/>
    <property type="evidence" value="ECO:0000318"/>
    <property type="project" value="GO_Central"/>
</dbReference>
<dbReference type="GO" id="GO:0046040">
    <property type="term" value="P:IMP metabolic process"/>
    <property type="evidence" value="ECO:0000318"/>
    <property type="project" value="GO_Central"/>
</dbReference>
<dbReference type="CDD" id="cd03108">
    <property type="entry name" value="AdSS"/>
    <property type="match status" value="1"/>
</dbReference>
<dbReference type="FunFam" id="1.10.300.10:FF:000001">
    <property type="entry name" value="Adenylosuccinate synthetase"/>
    <property type="match status" value="1"/>
</dbReference>
<dbReference type="FunFam" id="3.90.170.10:FF:000001">
    <property type="entry name" value="Adenylosuccinate synthetase"/>
    <property type="match status" value="1"/>
</dbReference>
<dbReference type="Gene3D" id="3.40.440.10">
    <property type="entry name" value="Adenylosuccinate Synthetase, subunit A, domain 1"/>
    <property type="match status" value="1"/>
</dbReference>
<dbReference type="Gene3D" id="1.10.300.10">
    <property type="entry name" value="Adenylosuccinate Synthetase, subunit A, domain 2"/>
    <property type="match status" value="1"/>
</dbReference>
<dbReference type="Gene3D" id="3.90.170.10">
    <property type="entry name" value="Adenylosuccinate Synthetase, subunit A, domain 3"/>
    <property type="match status" value="1"/>
</dbReference>
<dbReference type="HAMAP" id="MF_00011">
    <property type="entry name" value="Adenylosucc_synth"/>
    <property type="match status" value="1"/>
</dbReference>
<dbReference type="InterPro" id="IPR018220">
    <property type="entry name" value="Adenylosuccin_syn_GTP-bd"/>
</dbReference>
<dbReference type="InterPro" id="IPR033128">
    <property type="entry name" value="Adenylosuccin_syn_Lys_AS"/>
</dbReference>
<dbReference type="InterPro" id="IPR042109">
    <property type="entry name" value="Adenylosuccinate_synth_dom1"/>
</dbReference>
<dbReference type="InterPro" id="IPR042110">
    <property type="entry name" value="Adenylosuccinate_synth_dom2"/>
</dbReference>
<dbReference type="InterPro" id="IPR042111">
    <property type="entry name" value="Adenylosuccinate_synth_dom3"/>
</dbReference>
<dbReference type="InterPro" id="IPR001114">
    <property type="entry name" value="Adenylosuccinate_synthetase"/>
</dbReference>
<dbReference type="InterPro" id="IPR027417">
    <property type="entry name" value="P-loop_NTPase"/>
</dbReference>
<dbReference type="NCBIfam" id="NF002223">
    <property type="entry name" value="PRK01117.1"/>
    <property type="match status" value="1"/>
</dbReference>
<dbReference type="NCBIfam" id="TIGR00184">
    <property type="entry name" value="purA"/>
    <property type="match status" value="1"/>
</dbReference>
<dbReference type="PANTHER" id="PTHR11846">
    <property type="entry name" value="ADENYLOSUCCINATE SYNTHETASE"/>
    <property type="match status" value="1"/>
</dbReference>
<dbReference type="PANTHER" id="PTHR11846:SF0">
    <property type="entry name" value="ADENYLOSUCCINATE SYNTHETASE"/>
    <property type="match status" value="1"/>
</dbReference>
<dbReference type="Pfam" id="PF00709">
    <property type="entry name" value="Adenylsucc_synt"/>
    <property type="match status" value="1"/>
</dbReference>
<dbReference type="SMART" id="SM00788">
    <property type="entry name" value="Adenylsucc_synt"/>
    <property type="match status" value="1"/>
</dbReference>
<dbReference type="SUPFAM" id="SSF52540">
    <property type="entry name" value="P-loop containing nucleoside triphosphate hydrolases"/>
    <property type="match status" value="1"/>
</dbReference>
<dbReference type="PROSITE" id="PS01266">
    <property type="entry name" value="ADENYLOSUCCIN_SYN_1"/>
    <property type="match status" value="1"/>
</dbReference>
<dbReference type="PROSITE" id="PS00513">
    <property type="entry name" value="ADENYLOSUCCIN_SYN_2"/>
    <property type="match status" value="1"/>
</dbReference>
<proteinExistence type="inferred from homology"/>
<organism>
    <name type="scientific">Shewanella oneidensis (strain ATCC 700550 / JCM 31522 / CIP 106686 / LMG 19005 / NCIMB 14063 / MR-1)</name>
    <dbReference type="NCBI Taxonomy" id="211586"/>
    <lineage>
        <taxon>Bacteria</taxon>
        <taxon>Pseudomonadati</taxon>
        <taxon>Pseudomonadota</taxon>
        <taxon>Gammaproteobacteria</taxon>
        <taxon>Alteromonadales</taxon>
        <taxon>Shewanellaceae</taxon>
        <taxon>Shewanella</taxon>
    </lineage>
</organism>
<comment type="function">
    <text evidence="1">Plays an important role in the de novo pathway of purine nucleotide biosynthesis. Catalyzes the first committed step in the biosynthesis of AMP from IMP.</text>
</comment>
<comment type="catalytic activity">
    <reaction evidence="1">
        <text>IMP + L-aspartate + GTP = N(6)-(1,2-dicarboxyethyl)-AMP + GDP + phosphate + 2 H(+)</text>
        <dbReference type="Rhea" id="RHEA:15753"/>
        <dbReference type="ChEBI" id="CHEBI:15378"/>
        <dbReference type="ChEBI" id="CHEBI:29991"/>
        <dbReference type="ChEBI" id="CHEBI:37565"/>
        <dbReference type="ChEBI" id="CHEBI:43474"/>
        <dbReference type="ChEBI" id="CHEBI:57567"/>
        <dbReference type="ChEBI" id="CHEBI:58053"/>
        <dbReference type="ChEBI" id="CHEBI:58189"/>
        <dbReference type="EC" id="6.3.4.4"/>
    </reaction>
</comment>
<comment type="cofactor">
    <cofactor evidence="1">
        <name>Mg(2+)</name>
        <dbReference type="ChEBI" id="CHEBI:18420"/>
    </cofactor>
    <text evidence="1">Binds 1 Mg(2+) ion per subunit.</text>
</comment>
<comment type="pathway">
    <text evidence="1">Purine metabolism; AMP biosynthesis via de novo pathway; AMP from IMP: step 1/2.</text>
</comment>
<comment type="subunit">
    <text evidence="1">Homodimer.</text>
</comment>
<comment type="subcellular location">
    <subcellularLocation>
        <location evidence="1">Cytoplasm</location>
    </subcellularLocation>
</comment>
<comment type="similarity">
    <text evidence="1">Belongs to the adenylosuccinate synthetase family.</text>
</comment>
<feature type="chain" id="PRO_0000095223" description="Adenylosuccinate synthetase">
    <location>
        <begin position="1"/>
        <end position="431"/>
    </location>
</feature>
<feature type="active site" description="Proton acceptor" evidence="1">
    <location>
        <position position="14"/>
    </location>
</feature>
<feature type="active site" description="Proton donor" evidence="1">
    <location>
        <position position="42"/>
    </location>
</feature>
<feature type="binding site" evidence="1">
    <location>
        <begin position="13"/>
        <end position="19"/>
    </location>
    <ligand>
        <name>GTP</name>
        <dbReference type="ChEBI" id="CHEBI:37565"/>
    </ligand>
</feature>
<feature type="binding site" description="in other chain" evidence="1">
    <location>
        <begin position="14"/>
        <end position="17"/>
    </location>
    <ligand>
        <name>IMP</name>
        <dbReference type="ChEBI" id="CHEBI:58053"/>
        <note>ligand shared between dimeric partners</note>
    </ligand>
</feature>
<feature type="binding site" evidence="1">
    <location>
        <position position="14"/>
    </location>
    <ligand>
        <name>Mg(2+)</name>
        <dbReference type="ChEBI" id="CHEBI:18420"/>
    </ligand>
</feature>
<feature type="binding site" description="in other chain" evidence="1">
    <location>
        <begin position="39"/>
        <end position="42"/>
    </location>
    <ligand>
        <name>IMP</name>
        <dbReference type="ChEBI" id="CHEBI:58053"/>
        <note>ligand shared between dimeric partners</note>
    </ligand>
</feature>
<feature type="binding site" evidence="1">
    <location>
        <begin position="41"/>
        <end position="43"/>
    </location>
    <ligand>
        <name>GTP</name>
        <dbReference type="ChEBI" id="CHEBI:37565"/>
    </ligand>
</feature>
<feature type="binding site" evidence="1">
    <location>
        <position position="41"/>
    </location>
    <ligand>
        <name>Mg(2+)</name>
        <dbReference type="ChEBI" id="CHEBI:18420"/>
    </ligand>
</feature>
<feature type="binding site" description="in other chain" evidence="1">
    <location>
        <position position="130"/>
    </location>
    <ligand>
        <name>IMP</name>
        <dbReference type="ChEBI" id="CHEBI:58053"/>
        <note>ligand shared between dimeric partners</note>
    </ligand>
</feature>
<feature type="binding site" evidence="1">
    <location>
        <position position="144"/>
    </location>
    <ligand>
        <name>IMP</name>
        <dbReference type="ChEBI" id="CHEBI:58053"/>
        <note>ligand shared between dimeric partners</note>
    </ligand>
</feature>
<feature type="binding site" description="in other chain" evidence="1">
    <location>
        <position position="225"/>
    </location>
    <ligand>
        <name>IMP</name>
        <dbReference type="ChEBI" id="CHEBI:58053"/>
        <note>ligand shared between dimeric partners</note>
    </ligand>
</feature>
<feature type="binding site" description="in other chain" evidence="1">
    <location>
        <position position="240"/>
    </location>
    <ligand>
        <name>IMP</name>
        <dbReference type="ChEBI" id="CHEBI:58053"/>
        <note>ligand shared between dimeric partners</note>
    </ligand>
</feature>
<feature type="binding site" evidence="1">
    <location>
        <begin position="300"/>
        <end position="306"/>
    </location>
    <ligand>
        <name>substrate</name>
    </ligand>
</feature>
<feature type="binding site" description="in other chain" evidence="1">
    <location>
        <position position="304"/>
    </location>
    <ligand>
        <name>IMP</name>
        <dbReference type="ChEBI" id="CHEBI:58053"/>
        <note>ligand shared between dimeric partners</note>
    </ligand>
</feature>
<feature type="binding site" evidence="1">
    <location>
        <position position="306"/>
    </location>
    <ligand>
        <name>GTP</name>
        <dbReference type="ChEBI" id="CHEBI:37565"/>
    </ligand>
</feature>
<feature type="binding site" evidence="1">
    <location>
        <begin position="332"/>
        <end position="334"/>
    </location>
    <ligand>
        <name>GTP</name>
        <dbReference type="ChEBI" id="CHEBI:37565"/>
    </ligand>
</feature>
<feature type="binding site" evidence="1">
    <location>
        <begin position="415"/>
        <end position="417"/>
    </location>
    <ligand>
        <name>GTP</name>
        <dbReference type="ChEBI" id="CHEBI:37565"/>
    </ligand>
</feature>